<reference key="1">
    <citation type="journal article" date="2005" name="Genome Res.">
        <title>Complete genome sequence of the hyperthermophilic archaeon Thermococcus kodakaraensis KOD1 and comparison with Pyrococcus genomes.</title>
        <authorList>
            <person name="Fukui T."/>
            <person name="Atomi H."/>
            <person name="Kanai T."/>
            <person name="Matsumi R."/>
            <person name="Fujiwara S."/>
            <person name="Imanaka T."/>
        </authorList>
    </citation>
    <scope>NUCLEOTIDE SEQUENCE [LARGE SCALE GENOMIC DNA]</scope>
    <source>
        <strain>ATCC BAA-918 / JCM 12380 / KOD1</strain>
    </source>
</reference>
<reference evidence="4 5 6" key="2">
    <citation type="journal article" date="2020" name="Nature">
        <title>Dynamic RNA acetylation revealed by quantitative cross-evolutionary mapping.</title>
        <authorList>
            <person name="Sas-Chen A."/>
            <person name="Thomas J.M."/>
            <person name="Matzov D."/>
            <person name="Taoka M."/>
            <person name="Nance K.D."/>
            <person name="Nir R."/>
            <person name="Bryson K.M."/>
            <person name="Shachar R."/>
            <person name="Liman G.L.S."/>
            <person name="Burkhart B.W."/>
            <person name="Gamage S.T."/>
            <person name="Nobe Y."/>
            <person name="Briney C.A."/>
            <person name="Levy M.J."/>
            <person name="Fuchs R.T."/>
            <person name="Robb G.B."/>
            <person name="Hartmann J."/>
            <person name="Sharma S."/>
            <person name="Lin Q."/>
            <person name="Florens L."/>
            <person name="Washburn M.P."/>
            <person name="Isobe T."/>
            <person name="Santangelo T.J."/>
            <person name="Shalev-Benami M."/>
            <person name="Meier J.L."/>
            <person name="Schwartz S."/>
        </authorList>
    </citation>
    <scope>STRUCTURE BY ELECTRON MICROSCOPY (2.55 ANGSTROMS) IN 70S RIBOSOME</scope>
    <scope>SUBUNIT</scope>
    <source>
        <strain>ATCC BAA-918 / TS559</strain>
    </source>
</reference>
<evidence type="ECO:0000255" key="1">
    <source>
        <dbReference type="HAMAP-Rule" id="MF_01337"/>
    </source>
</evidence>
<evidence type="ECO:0000269" key="2">
    <source>
    </source>
</evidence>
<evidence type="ECO:0000305" key="3"/>
<evidence type="ECO:0007744" key="4">
    <source>
        <dbReference type="PDB" id="6SKF"/>
    </source>
</evidence>
<evidence type="ECO:0007744" key="5">
    <source>
        <dbReference type="PDB" id="6SKG"/>
    </source>
</evidence>
<evidence type="ECO:0007744" key="6">
    <source>
        <dbReference type="PDB" id="6TH6"/>
    </source>
</evidence>
<name>RL18_THEKO</name>
<protein>
    <recommendedName>
        <fullName evidence="1">Large ribosomal subunit protein uL18</fullName>
    </recommendedName>
    <alternativeName>
        <fullName evidence="3">50S ribosomal protein L18</fullName>
    </alternativeName>
</protein>
<dbReference type="EMBL" id="AP006878">
    <property type="protein sequence ID" value="BAD85711.1"/>
    <property type="molecule type" value="Genomic_DNA"/>
</dbReference>
<dbReference type="RefSeq" id="WP_011250473.1">
    <property type="nucleotide sequence ID" value="NC_006624.1"/>
</dbReference>
<dbReference type="PDB" id="6SKF">
    <property type="method" value="EM"/>
    <property type="resolution" value="2.95 A"/>
    <property type="chains" value="BQ=1-201"/>
</dbReference>
<dbReference type="PDB" id="6SKG">
    <property type="method" value="EM"/>
    <property type="resolution" value="2.65 A"/>
    <property type="chains" value="BQ=1-201"/>
</dbReference>
<dbReference type="PDB" id="6TH6">
    <property type="method" value="EM"/>
    <property type="resolution" value="2.55 A"/>
    <property type="chains" value="BQ=1-201"/>
</dbReference>
<dbReference type="PDBsum" id="6SKF"/>
<dbReference type="PDBsum" id="6SKG"/>
<dbReference type="PDBsum" id="6TH6"/>
<dbReference type="EMDB" id="EMD-10223"/>
<dbReference type="EMDB" id="EMD-10224"/>
<dbReference type="EMDB" id="EMD-10503"/>
<dbReference type="SMR" id="Q5JJG7"/>
<dbReference type="FunCoup" id="Q5JJG7">
    <property type="interactions" value="166"/>
</dbReference>
<dbReference type="STRING" id="69014.TK1522"/>
<dbReference type="EnsemblBacteria" id="BAD85711">
    <property type="protein sequence ID" value="BAD85711"/>
    <property type="gene ID" value="TK1522"/>
</dbReference>
<dbReference type="GeneID" id="78448050"/>
<dbReference type="KEGG" id="tko:TK1522"/>
<dbReference type="PATRIC" id="fig|69014.16.peg.1482"/>
<dbReference type="eggNOG" id="arCOG04088">
    <property type="taxonomic scope" value="Archaea"/>
</dbReference>
<dbReference type="HOGENOM" id="CLU_056222_2_0_2"/>
<dbReference type="InParanoid" id="Q5JJG7"/>
<dbReference type="OrthoDB" id="8644at2157"/>
<dbReference type="PhylomeDB" id="Q5JJG7"/>
<dbReference type="Proteomes" id="UP000000536">
    <property type="component" value="Chromosome"/>
</dbReference>
<dbReference type="GO" id="GO:0022625">
    <property type="term" value="C:cytosolic large ribosomal subunit"/>
    <property type="evidence" value="ECO:0000318"/>
    <property type="project" value="GO_Central"/>
</dbReference>
<dbReference type="GO" id="GO:0008097">
    <property type="term" value="F:5S rRNA binding"/>
    <property type="evidence" value="ECO:0000318"/>
    <property type="project" value="GO_Central"/>
</dbReference>
<dbReference type="GO" id="GO:0003735">
    <property type="term" value="F:structural constituent of ribosome"/>
    <property type="evidence" value="ECO:0000318"/>
    <property type="project" value="GO_Central"/>
</dbReference>
<dbReference type="GO" id="GO:0000027">
    <property type="term" value="P:ribosomal large subunit assembly"/>
    <property type="evidence" value="ECO:0000318"/>
    <property type="project" value="GO_Central"/>
</dbReference>
<dbReference type="GO" id="GO:0006412">
    <property type="term" value="P:translation"/>
    <property type="evidence" value="ECO:0007669"/>
    <property type="project" value="UniProtKB-UniRule"/>
</dbReference>
<dbReference type="CDD" id="cd00432">
    <property type="entry name" value="Ribosomal_L18_L5e"/>
    <property type="match status" value="1"/>
</dbReference>
<dbReference type="FunFam" id="3.30.420.100:FF:000008">
    <property type="entry name" value="50S ribosomal protein L18"/>
    <property type="match status" value="1"/>
</dbReference>
<dbReference type="Gene3D" id="3.30.420.100">
    <property type="match status" value="1"/>
</dbReference>
<dbReference type="HAMAP" id="MF_01337_A">
    <property type="entry name" value="Ribosomal_uL18_A"/>
    <property type="match status" value="1"/>
</dbReference>
<dbReference type="InterPro" id="IPR005485">
    <property type="entry name" value="Rbsml_uL18_euk"/>
</dbReference>
<dbReference type="NCBIfam" id="NF006342">
    <property type="entry name" value="PRK08569.1"/>
    <property type="match status" value="1"/>
</dbReference>
<dbReference type="PANTHER" id="PTHR23410:SF12">
    <property type="entry name" value="LARGE RIBOSOMAL SUBUNIT PROTEIN UL18"/>
    <property type="match status" value="1"/>
</dbReference>
<dbReference type="PANTHER" id="PTHR23410">
    <property type="entry name" value="RIBOSOMAL PROTEIN L5-RELATED"/>
    <property type="match status" value="1"/>
</dbReference>
<dbReference type="Pfam" id="PF17144">
    <property type="entry name" value="Ribosomal_L5e"/>
    <property type="match status" value="2"/>
</dbReference>
<dbReference type="PRINTS" id="PR00058">
    <property type="entry name" value="RIBOSOMALL5"/>
</dbReference>
<dbReference type="SUPFAM" id="SSF53137">
    <property type="entry name" value="Translational machinery components"/>
    <property type="match status" value="1"/>
</dbReference>
<sequence>MAHGPRYRVPFRRRREGKTNYHKRLKLLKSKKPRLVVRKTLNHHIAQIVVYDPKGDKTLVSAHTMELMRDFGWKGHGGNTPSAYLLGLLIGYKAKQAGIEEAILDIGLHPPTRGSSIFAVLKGAVDAGLNVPHSEEIYPEDYRINGEHIANYAKALKEEDEALYRKQFSGYLVKGLEPEKLPEHFEEVKAKIIEKFEGARE</sequence>
<comment type="function">
    <text evidence="1">This is one of the proteins that bind and probably mediate the attachment of the 5S RNA into the large ribosomal subunit, where it forms part of the central protuberance.</text>
</comment>
<comment type="subunit">
    <text evidence="1 2">Part of the 50S ribosomal subunit (PubMed:32555463). Contacts the 5S and 23S rRNAs.</text>
</comment>
<comment type="similarity">
    <text evidence="1">Belongs to the universal ribosomal protein uL18 family.</text>
</comment>
<gene>
    <name evidence="1" type="primary">rpl18</name>
    <name type="ordered locus">TK1522</name>
</gene>
<organism>
    <name type="scientific">Thermococcus kodakarensis (strain ATCC BAA-918 / JCM 12380 / KOD1)</name>
    <name type="common">Pyrococcus kodakaraensis (strain KOD1)</name>
    <dbReference type="NCBI Taxonomy" id="69014"/>
    <lineage>
        <taxon>Archaea</taxon>
        <taxon>Methanobacteriati</taxon>
        <taxon>Methanobacteriota</taxon>
        <taxon>Thermococci</taxon>
        <taxon>Thermococcales</taxon>
        <taxon>Thermococcaceae</taxon>
        <taxon>Thermococcus</taxon>
    </lineage>
</organism>
<keyword id="KW-0002">3D-structure</keyword>
<keyword id="KW-1185">Reference proteome</keyword>
<keyword id="KW-0687">Ribonucleoprotein</keyword>
<keyword id="KW-0689">Ribosomal protein</keyword>
<keyword id="KW-0694">RNA-binding</keyword>
<keyword id="KW-0699">rRNA-binding</keyword>
<accession>Q5JJG7</accession>
<feature type="chain" id="PRO_0000131416" description="Large ribosomal subunit protein uL18">
    <location>
        <begin position="1"/>
        <end position="201"/>
    </location>
</feature>
<proteinExistence type="evidence at protein level"/>